<organism>
    <name type="scientific">Desulfovibrio desulfuricans (strain ATCC 27774 / DSM 6949 / MB)</name>
    <dbReference type="NCBI Taxonomy" id="525146"/>
    <lineage>
        <taxon>Bacteria</taxon>
        <taxon>Pseudomonadati</taxon>
        <taxon>Thermodesulfobacteriota</taxon>
        <taxon>Desulfovibrionia</taxon>
        <taxon>Desulfovibrionales</taxon>
        <taxon>Desulfovibrionaceae</taxon>
        <taxon>Desulfovibrio</taxon>
    </lineage>
</organism>
<feature type="chain" id="PRO_1000166585" description="ATP synthase subunit beta">
    <location>
        <begin position="1"/>
        <end position="473"/>
    </location>
</feature>
<feature type="binding site" evidence="1">
    <location>
        <begin position="156"/>
        <end position="163"/>
    </location>
    <ligand>
        <name>ATP</name>
        <dbReference type="ChEBI" id="CHEBI:30616"/>
    </ligand>
</feature>
<name>ATPB_DESDA</name>
<proteinExistence type="inferred from homology"/>
<comment type="function">
    <text evidence="1">Produces ATP from ADP in the presence of a proton gradient across the membrane. The catalytic sites are hosted primarily by the beta subunits.</text>
</comment>
<comment type="catalytic activity">
    <reaction evidence="1">
        <text>ATP + H2O + 4 H(+)(in) = ADP + phosphate + 5 H(+)(out)</text>
        <dbReference type="Rhea" id="RHEA:57720"/>
        <dbReference type="ChEBI" id="CHEBI:15377"/>
        <dbReference type="ChEBI" id="CHEBI:15378"/>
        <dbReference type="ChEBI" id="CHEBI:30616"/>
        <dbReference type="ChEBI" id="CHEBI:43474"/>
        <dbReference type="ChEBI" id="CHEBI:456216"/>
        <dbReference type="EC" id="7.1.2.2"/>
    </reaction>
</comment>
<comment type="subunit">
    <text evidence="1">F-type ATPases have 2 components, CF(1) - the catalytic core - and CF(0) - the membrane proton channel. CF(1) has five subunits: alpha(3), beta(3), gamma(1), delta(1), epsilon(1). CF(0) has three main subunits: a(1), b(2) and c(9-12). The alpha and beta chains form an alternating ring which encloses part of the gamma chain. CF(1) is attached to CF(0) by a central stalk formed by the gamma and epsilon chains, while a peripheral stalk is formed by the delta and b chains.</text>
</comment>
<comment type="subcellular location">
    <subcellularLocation>
        <location evidence="1">Cell inner membrane</location>
        <topology evidence="1">Peripheral membrane protein</topology>
    </subcellularLocation>
</comment>
<comment type="similarity">
    <text evidence="1">Belongs to the ATPase alpha/beta chains family.</text>
</comment>
<sequence length="473" mass="51397">MSKNIGKIVQVIGAVVDVEFSDGNLPNIFTALEIKNPNNTDAPELICEVAQHLGDNVVRTIAMDATEGLVRGMDAVDTGQPIMVPVGKPSVGRILNVIGRPVDEMGPINAEKYYPIHRPAPAFTDQNTKVELLETGIKVVDLLVPFPKGGKMGLFGGAGVGKTVILMEMINNIAKQHGGSSVFAGVGERTREGNDLYHELKDAGVLERATLVYGQMNEPPGARARVALTALACAEYFRDEEHQDVLLFIDNIFRFTQAGSEVSALLGRMPSAVGYQPTLGTDLGSLQERITSTNTGSITSVQAVYVPADDLTDPAPATTFSHLDGTLVLSRQIAELGIYPAVDPLDSTSRILDPNVVGEEHYAVARRVQMVLQKYKELQDIIAILGMDELSDEDKLTVARARRIQRFLSQPFHVAETFTGTPGQYVNLEDTIKGFKGILDGAYDHMAEGDFYMLGGIEQAVAKYEQRKLQEEN</sequence>
<dbReference type="EC" id="7.1.2.2" evidence="1"/>
<dbReference type="EMBL" id="CP001358">
    <property type="protein sequence ID" value="ACL50084.1"/>
    <property type="molecule type" value="Genomic_DNA"/>
</dbReference>
<dbReference type="SMR" id="B8J439"/>
<dbReference type="STRING" id="525146.Ddes_2188"/>
<dbReference type="KEGG" id="dds:Ddes_2188"/>
<dbReference type="eggNOG" id="COG0055">
    <property type="taxonomic scope" value="Bacteria"/>
</dbReference>
<dbReference type="HOGENOM" id="CLU_022398_0_2_7"/>
<dbReference type="GO" id="GO:0005886">
    <property type="term" value="C:plasma membrane"/>
    <property type="evidence" value="ECO:0007669"/>
    <property type="project" value="UniProtKB-SubCell"/>
</dbReference>
<dbReference type="GO" id="GO:0045259">
    <property type="term" value="C:proton-transporting ATP synthase complex"/>
    <property type="evidence" value="ECO:0007669"/>
    <property type="project" value="UniProtKB-KW"/>
</dbReference>
<dbReference type="GO" id="GO:0005524">
    <property type="term" value="F:ATP binding"/>
    <property type="evidence" value="ECO:0007669"/>
    <property type="project" value="UniProtKB-UniRule"/>
</dbReference>
<dbReference type="GO" id="GO:0016887">
    <property type="term" value="F:ATP hydrolysis activity"/>
    <property type="evidence" value="ECO:0007669"/>
    <property type="project" value="InterPro"/>
</dbReference>
<dbReference type="GO" id="GO:0046933">
    <property type="term" value="F:proton-transporting ATP synthase activity, rotational mechanism"/>
    <property type="evidence" value="ECO:0007669"/>
    <property type="project" value="UniProtKB-UniRule"/>
</dbReference>
<dbReference type="CDD" id="cd18110">
    <property type="entry name" value="ATP-synt_F1_beta_C"/>
    <property type="match status" value="1"/>
</dbReference>
<dbReference type="CDD" id="cd18115">
    <property type="entry name" value="ATP-synt_F1_beta_N"/>
    <property type="match status" value="1"/>
</dbReference>
<dbReference type="CDD" id="cd01133">
    <property type="entry name" value="F1-ATPase_beta_CD"/>
    <property type="match status" value="1"/>
</dbReference>
<dbReference type="FunFam" id="1.10.1140.10:FF:000001">
    <property type="entry name" value="ATP synthase subunit beta"/>
    <property type="match status" value="1"/>
</dbReference>
<dbReference type="FunFam" id="2.40.10.170:FF:000005">
    <property type="entry name" value="ATP synthase subunit beta"/>
    <property type="match status" value="1"/>
</dbReference>
<dbReference type="FunFam" id="3.40.50.300:FF:000026">
    <property type="entry name" value="ATP synthase subunit beta"/>
    <property type="match status" value="1"/>
</dbReference>
<dbReference type="Gene3D" id="2.40.10.170">
    <property type="match status" value="1"/>
</dbReference>
<dbReference type="Gene3D" id="1.10.1140.10">
    <property type="entry name" value="Bovine Mitochondrial F1-atpase, Atp Synthase Beta Chain, Chain D, domain 3"/>
    <property type="match status" value="1"/>
</dbReference>
<dbReference type="Gene3D" id="3.40.50.300">
    <property type="entry name" value="P-loop containing nucleotide triphosphate hydrolases"/>
    <property type="match status" value="1"/>
</dbReference>
<dbReference type="HAMAP" id="MF_01347">
    <property type="entry name" value="ATP_synth_beta_bact"/>
    <property type="match status" value="1"/>
</dbReference>
<dbReference type="InterPro" id="IPR003593">
    <property type="entry name" value="AAA+_ATPase"/>
</dbReference>
<dbReference type="InterPro" id="IPR055190">
    <property type="entry name" value="ATP-synt_VA_C"/>
</dbReference>
<dbReference type="InterPro" id="IPR005722">
    <property type="entry name" value="ATP_synth_F1_bsu"/>
</dbReference>
<dbReference type="InterPro" id="IPR020003">
    <property type="entry name" value="ATPase_a/bsu_AS"/>
</dbReference>
<dbReference type="InterPro" id="IPR050053">
    <property type="entry name" value="ATPase_alpha/beta_chains"/>
</dbReference>
<dbReference type="InterPro" id="IPR004100">
    <property type="entry name" value="ATPase_F1/V1/A1_a/bsu_N"/>
</dbReference>
<dbReference type="InterPro" id="IPR036121">
    <property type="entry name" value="ATPase_F1/V1/A1_a/bsu_N_sf"/>
</dbReference>
<dbReference type="InterPro" id="IPR000194">
    <property type="entry name" value="ATPase_F1/V1/A1_a/bsu_nucl-bd"/>
</dbReference>
<dbReference type="InterPro" id="IPR024034">
    <property type="entry name" value="ATPase_F1/V1_b/a_C"/>
</dbReference>
<dbReference type="InterPro" id="IPR027417">
    <property type="entry name" value="P-loop_NTPase"/>
</dbReference>
<dbReference type="NCBIfam" id="TIGR01039">
    <property type="entry name" value="atpD"/>
    <property type="match status" value="1"/>
</dbReference>
<dbReference type="PANTHER" id="PTHR15184">
    <property type="entry name" value="ATP SYNTHASE"/>
    <property type="match status" value="1"/>
</dbReference>
<dbReference type="PANTHER" id="PTHR15184:SF71">
    <property type="entry name" value="ATP SYNTHASE SUBUNIT BETA, MITOCHONDRIAL"/>
    <property type="match status" value="1"/>
</dbReference>
<dbReference type="Pfam" id="PF00006">
    <property type="entry name" value="ATP-synt_ab"/>
    <property type="match status" value="1"/>
</dbReference>
<dbReference type="Pfam" id="PF02874">
    <property type="entry name" value="ATP-synt_ab_N"/>
    <property type="match status" value="1"/>
</dbReference>
<dbReference type="Pfam" id="PF22919">
    <property type="entry name" value="ATP-synt_VA_C"/>
    <property type="match status" value="1"/>
</dbReference>
<dbReference type="PIRSF" id="PIRSF039072">
    <property type="entry name" value="ATPase_subunit_beta"/>
    <property type="match status" value="1"/>
</dbReference>
<dbReference type="SMART" id="SM00382">
    <property type="entry name" value="AAA"/>
    <property type="match status" value="1"/>
</dbReference>
<dbReference type="SUPFAM" id="SSF47917">
    <property type="entry name" value="C-terminal domain of alpha and beta subunits of F1 ATP synthase"/>
    <property type="match status" value="1"/>
</dbReference>
<dbReference type="SUPFAM" id="SSF50615">
    <property type="entry name" value="N-terminal domain of alpha and beta subunits of F1 ATP synthase"/>
    <property type="match status" value="1"/>
</dbReference>
<dbReference type="SUPFAM" id="SSF52540">
    <property type="entry name" value="P-loop containing nucleoside triphosphate hydrolases"/>
    <property type="match status" value="1"/>
</dbReference>
<dbReference type="PROSITE" id="PS00152">
    <property type="entry name" value="ATPASE_ALPHA_BETA"/>
    <property type="match status" value="1"/>
</dbReference>
<gene>
    <name evidence="1" type="primary">atpD</name>
    <name type="ordered locus">Ddes_2188</name>
</gene>
<evidence type="ECO:0000255" key="1">
    <source>
        <dbReference type="HAMAP-Rule" id="MF_01347"/>
    </source>
</evidence>
<reference key="1">
    <citation type="submission" date="2009-01" db="EMBL/GenBank/DDBJ databases">
        <title>Complete sequence of Desulfovibrio desulfuricans subsp. desulfuricans str. ATCC 27774.</title>
        <authorList>
            <consortium name="US DOE Joint Genome Institute"/>
            <person name="Lucas S."/>
            <person name="Copeland A."/>
            <person name="Lapidus A."/>
            <person name="Glavina del Rio T."/>
            <person name="Tice H."/>
            <person name="Bruce D."/>
            <person name="Goodwin L."/>
            <person name="Pitluck S."/>
            <person name="Sims D."/>
            <person name="Lu M."/>
            <person name="Kiss H."/>
            <person name="Meineke L."/>
            <person name="Brettin T."/>
            <person name="Detter J.C."/>
            <person name="Han C."/>
            <person name="Larimer F."/>
            <person name="Land M."/>
            <person name="Hauser L."/>
            <person name="Kyrpides N."/>
            <person name="Ovchinnikova G."/>
            <person name="Hazen T.C."/>
        </authorList>
    </citation>
    <scope>NUCLEOTIDE SEQUENCE [LARGE SCALE GENOMIC DNA]</scope>
    <source>
        <strain>ATCC 27774 / DSM 6949 / MB</strain>
    </source>
</reference>
<protein>
    <recommendedName>
        <fullName evidence="1">ATP synthase subunit beta</fullName>
        <ecNumber evidence="1">7.1.2.2</ecNumber>
    </recommendedName>
    <alternativeName>
        <fullName evidence="1">ATP synthase F1 sector subunit beta</fullName>
    </alternativeName>
    <alternativeName>
        <fullName evidence="1">F-ATPase subunit beta</fullName>
    </alternativeName>
</protein>
<keyword id="KW-0066">ATP synthesis</keyword>
<keyword id="KW-0067">ATP-binding</keyword>
<keyword id="KW-0997">Cell inner membrane</keyword>
<keyword id="KW-1003">Cell membrane</keyword>
<keyword id="KW-0139">CF(1)</keyword>
<keyword id="KW-0375">Hydrogen ion transport</keyword>
<keyword id="KW-0406">Ion transport</keyword>
<keyword id="KW-0472">Membrane</keyword>
<keyword id="KW-0547">Nucleotide-binding</keyword>
<keyword id="KW-1278">Translocase</keyword>
<keyword id="KW-0813">Transport</keyword>
<accession>B8J439</accession>